<dbReference type="EMBL" id="AY756176">
    <property type="protein sequence ID" value="AAV74417.1"/>
    <property type="molecule type" value="Genomic_DNA"/>
</dbReference>
<dbReference type="SMR" id="Q5QA93"/>
<dbReference type="PhylomeDB" id="Q5QA93"/>
<dbReference type="GO" id="GO:0030659">
    <property type="term" value="C:cytoplasmic vesicle membrane"/>
    <property type="evidence" value="ECO:0007669"/>
    <property type="project" value="UniProtKB-SubCell"/>
</dbReference>
<dbReference type="GO" id="GO:0005774">
    <property type="term" value="C:vacuolar membrane"/>
    <property type="evidence" value="ECO:0007669"/>
    <property type="project" value="UniProtKB-SubCell"/>
</dbReference>
<dbReference type="GO" id="GO:0015031">
    <property type="term" value="P:protein transport"/>
    <property type="evidence" value="ECO:0007669"/>
    <property type="project" value="UniProtKB-KW"/>
</dbReference>
<dbReference type="Gene3D" id="2.130.10.10">
    <property type="entry name" value="YVTN repeat-like/Quinoprotein amine dehydrogenase"/>
    <property type="match status" value="1"/>
</dbReference>
<dbReference type="InterPro" id="IPR048720">
    <property type="entry name" value="PROPPIN"/>
</dbReference>
<dbReference type="InterPro" id="IPR015943">
    <property type="entry name" value="WD40/YVTN_repeat-like_dom_sf"/>
</dbReference>
<dbReference type="InterPro" id="IPR036322">
    <property type="entry name" value="WD40_repeat_dom_sf"/>
</dbReference>
<dbReference type="InterPro" id="IPR001680">
    <property type="entry name" value="WD40_rpt"/>
</dbReference>
<dbReference type="PANTHER" id="PTHR11227">
    <property type="entry name" value="WD-REPEAT PROTEIN INTERACTING WITH PHOSPHOINOSIDES WIPI -RELATED"/>
    <property type="match status" value="1"/>
</dbReference>
<dbReference type="Pfam" id="PF21032">
    <property type="entry name" value="PROPPIN"/>
    <property type="match status" value="1"/>
</dbReference>
<dbReference type="SMART" id="SM00320">
    <property type="entry name" value="WD40"/>
    <property type="match status" value="3"/>
</dbReference>
<dbReference type="SUPFAM" id="SSF50978">
    <property type="entry name" value="WD40 repeat-like"/>
    <property type="match status" value="1"/>
</dbReference>
<accession>Q5QA93</accession>
<comment type="function">
    <text evidence="1">Involved in mitochondrial or peroxisomal functions and amino acid signaling pathways.</text>
</comment>
<comment type="subcellular location">
    <subcellularLocation>
        <location evidence="1">Vacuole membrane</location>
        <topology evidence="1">Peripheral membrane protein</topology>
    </subcellularLocation>
    <subcellularLocation>
        <location evidence="1">Cytoplasmic vesicle membrane</location>
        <topology evidence="1">Peripheral membrane protein</topology>
    </subcellularLocation>
    <text evidence="1">Vesicular and vacuolar.</text>
</comment>
<comment type="domain">
    <text evidence="1">May contain a beta-propeller domain involved in specific binding to phosphatidylinositol 3,5-bisphosphate (PIP2), leading to the association of the protein to the membrane.</text>
</comment>
<comment type="similarity">
    <text evidence="2">Belongs to the WD repeat PROPPIN family.</text>
</comment>
<proteinExistence type="inferred from homology"/>
<gene>
    <name type="primary">HSV2</name>
</gene>
<organism>
    <name type="scientific">Pichia angusta</name>
    <name type="common">Yeast</name>
    <name type="synonym">Hansenula polymorpha</name>
    <dbReference type="NCBI Taxonomy" id="870730"/>
    <lineage>
        <taxon>Eukaryota</taxon>
        <taxon>Fungi</taxon>
        <taxon>Dikarya</taxon>
        <taxon>Ascomycota</taxon>
        <taxon>Saccharomycotina</taxon>
        <taxon>Pichiomycetes</taxon>
        <taxon>Pichiales</taxon>
        <taxon>Pichiaceae</taxon>
        <taxon>Ogataea</taxon>
    </lineage>
</organism>
<evidence type="ECO:0000250" key="1"/>
<evidence type="ECO:0000305" key="2"/>
<name>HSV2_PICAN</name>
<reference key="1">
    <citation type="journal article" date="2004" name="FEBS Lett.">
        <title>Atg21p is essential for macropexophagy and microautophagy in the yeast Hansenula polymorpha.</title>
        <authorList>
            <person name="Leao-Helder A.N."/>
            <person name="Krikken A.M."/>
            <person name="Gellissen G."/>
            <person name="van der Klei I.J."/>
            <person name="Veenhuis M."/>
            <person name="Kiel J.A.K.W."/>
        </authorList>
    </citation>
    <scope>NUCLEOTIDE SEQUENCE [GENOMIC DNA]</scope>
    <source>
        <strain>ATCC 34438 / CBS 4732 / DSM 70277 / JCM 3621 / NBRC 1476 / NRRL Y-5445</strain>
    </source>
</reference>
<reference key="2">
    <citation type="journal article" date="2003" name="FEMS Yeast Res.">
        <title>The Hansenula polymorpha (strain CBS4732) genome sequencing and analysis.</title>
        <authorList>
            <person name="Ramezani-Rad M."/>
            <person name="Hollenberg C.P."/>
            <person name="Lauber J."/>
            <person name="Wedler H."/>
            <person name="Griess E."/>
            <person name="Wagner C."/>
            <person name="Albermann K."/>
            <person name="Hani J."/>
            <person name="Piontek M."/>
            <person name="Dahlems U."/>
            <person name="Gellissen G."/>
        </authorList>
    </citation>
    <scope>NUCLEOTIDE SEQUENCE [GENOMIC DNA]</scope>
    <source>
        <strain>ATCC 34438 / CBS 4732 / DSM 70277 / JCM 3621 / NBRC 1476 / NRRL Y-5445</strain>
    </source>
</reference>
<protein>
    <recommendedName>
        <fullName>SVP1-like protein 2</fullName>
    </recommendedName>
</protein>
<keyword id="KW-0968">Cytoplasmic vesicle</keyword>
<keyword id="KW-0472">Membrane</keyword>
<keyword id="KW-0653">Protein transport</keyword>
<keyword id="KW-0677">Repeat</keyword>
<keyword id="KW-0813">Transport</keyword>
<keyword id="KW-0926">Vacuole</keyword>
<keyword id="KW-0853">WD repeat</keyword>
<sequence>MNTHRPIESVRAHEPAVLNAAFNQDQTCFAVCHESGFQVYNTDPMELRMKRTFSTNGGVGLIAMLHRTNYVALVGGGRQPRFPVNKLCIWDDLKKKPSIMLEFMSPILNVLLSRILIVVVLKNKVLIHAFESKPKLLAQHETYDNEAGVAELSVNEQTSFLAFPGRAIGQIQLVDVSPAHRDRNLISIIKAHKSRIQCLAISNSGLLIASASQTGTIIRIHDTAKCSLRFELRRGLDRATVTSIKFSPDDSKLAVLSDKNTLHVYNLTAADPQPESAMANRLHLLSAVPLMPTYFRSVWSFVSYHIDTKDDAVNDCGVLGWADNESIVVLWKKKGIWEKYVLVENDKWTLVREGWRRFEE</sequence>
<feature type="chain" id="PRO_0000051031" description="SVP1-like protein 2">
    <location>
        <begin position="1"/>
        <end position="360"/>
    </location>
</feature>
<feature type="repeat" description="WD 1">
    <location>
        <begin position="12"/>
        <end position="50"/>
    </location>
</feature>
<feature type="repeat" description="WD 2">
    <location>
        <begin position="191"/>
        <end position="231"/>
    </location>
</feature>
<feature type="repeat" description="WD 3">
    <location>
        <begin position="236"/>
        <end position="275"/>
    </location>
</feature>